<sequence length="338" mass="36899">MSAVNENNLEGVSETVLTLRKVVVNESEPLARRFRALFSLKYLACLQPPSEDTLPAIEAIAAAFSSKSALLKHELAYCLGQTRNPDAVAFLQQVLKDKEEDVMCRHEAAEALGALGYEDSLEILKALKDDENEPEVIRETCDIAVDRIVWENSEARKAEKLKPSDFTSIDPAPPMPLEAAEPSIPELEKTLLDTKLPLFQRYRAMFALRDLASPPDLPTAVQAVDALAKGLKDPSALFRHEVAFVFGQLCHPASVPSLTECLSNQEEAGMVRHEAAEALGSLGDVEGVEDTLKKFLNDPEQVVRDSIIVALDMAEFEKNGEMEYALVPDSGAPAAVSA</sequence>
<evidence type="ECO:0000255" key="1">
    <source>
        <dbReference type="HAMAP-Rule" id="MF_03101"/>
    </source>
</evidence>
<comment type="function">
    <text evidence="1">Catalyzes the hydroxylation of the N(6)-(4-aminobutyl)-L-lysine intermediate to form hypusine, an essential post-translational modification only found in mature eIF-5A factor.</text>
</comment>
<comment type="catalytic activity">
    <reaction evidence="1">
        <text>[eIF5A protein]-deoxyhypusine + AH2 + O2 = [eIF5A protein]-hypusine + A + H2O</text>
        <dbReference type="Rhea" id="RHEA:14101"/>
        <dbReference type="Rhea" id="RHEA-COMP:10144"/>
        <dbReference type="Rhea" id="RHEA-COMP:12592"/>
        <dbReference type="ChEBI" id="CHEBI:13193"/>
        <dbReference type="ChEBI" id="CHEBI:15377"/>
        <dbReference type="ChEBI" id="CHEBI:15379"/>
        <dbReference type="ChEBI" id="CHEBI:17499"/>
        <dbReference type="ChEBI" id="CHEBI:82657"/>
        <dbReference type="ChEBI" id="CHEBI:91175"/>
        <dbReference type="EC" id="1.14.99.29"/>
    </reaction>
</comment>
<comment type="cofactor">
    <cofactor evidence="1">
        <name>Fe(2+)</name>
        <dbReference type="ChEBI" id="CHEBI:29033"/>
    </cofactor>
    <text evidence="1">Binds 2 Fe(2+) ions per subunit.</text>
</comment>
<comment type="pathway">
    <text evidence="1">Protein modification; eIF5A hypusination.</text>
</comment>
<comment type="subcellular location">
    <subcellularLocation>
        <location evidence="1">Cytoplasm</location>
    </subcellularLocation>
    <subcellularLocation>
        <location evidence="1">Nucleus</location>
    </subcellularLocation>
</comment>
<comment type="similarity">
    <text evidence="1">Belongs to the deoxyhypusine hydroxylase family.</text>
</comment>
<reference key="1">
    <citation type="journal article" date="2007" name="Nat. Biotechnol.">
        <title>Genome sequencing and analysis of the versatile cell factory Aspergillus niger CBS 513.88.</title>
        <authorList>
            <person name="Pel H.J."/>
            <person name="de Winde J.H."/>
            <person name="Archer D.B."/>
            <person name="Dyer P.S."/>
            <person name="Hofmann G."/>
            <person name="Schaap P.J."/>
            <person name="Turner G."/>
            <person name="de Vries R.P."/>
            <person name="Albang R."/>
            <person name="Albermann K."/>
            <person name="Andersen M.R."/>
            <person name="Bendtsen J.D."/>
            <person name="Benen J.A.E."/>
            <person name="van den Berg M."/>
            <person name="Breestraat S."/>
            <person name="Caddick M.X."/>
            <person name="Contreras R."/>
            <person name="Cornell M."/>
            <person name="Coutinho P.M."/>
            <person name="Danchin E.G.J."/>
            <person name="Debets A.J.M."/>
            <person name="Dekker P."/>
            <person name="van Dijck P.W.M."/>
            <person name="van Dijk A."/>
            <person name="Dijkhuizen L."/>
            <person name="Driessen A.J.M."/>
            <person name="d'Enfert C."/>
            <person name="Geysens S."/>
            <person name="Goosen C."/>
            <person name="Groot G.S.P."/>
            <person name="de Groot P.W.J."/>
            <person name="Guillemette T."/>
            <person name="Henrissat B."/>
            <person name="Herweijer M."/>
            <person name="van den Hombergh J.P.T.W."/>
            <person name="van den Hondel C.A.M.J.J."/>
            <person name="van der Heijden R.T.J.M."/>
            <person name="van der Kaaij R.M."/>
            <person name="Klis F.M."/>
            <person name="Kools H.J."/>
            <person name="Kubicek C.P."/>
            <person name="van Kuyk P.A."/>
            <person name="Lauber J."/>
            <person name="Lu X."/>
            <person name="van der Maarel M.J.E.C."/>
            <person name="Meulenberg R."/>
            <person name="Menke H."/>
            <person name="Mortimer M.A."/>
            <person name="Nielsen J."/>
            <person name="Oliver S.G."/>
            <person name="Olsthoorn M."/>
            <person name="Pal K."/>
            <person name="van Peij N.N.M.E."/>
            <person name="Ram A.F.J."/>
            <person name="Rinas U."/>
            <person name="Roubos J.A."/>
            <person name="Sagt C.M.J."/>
            <person name="Schmoll M."/>
            <person name="Sun J."/>
            <person name="Ussery D."/>
            <person name="Varga J."/>
            <person name="Vervecken W."/>
            <person name="van de Vondervoort P.J.J."/>
            <person name="Wedler H."/>
            <person name="Woesten H.A.B."/>
            <person name="Zeng A.-P."/>
            <person name="van Ooyen A.J.J."/>
            <person name="Visser J."/>
            <person name="Stam H."/>
        </authorList>
    </citation>
    <scope>NUCLEOTIDE SEQUENCE [LARGE SCALE GENOMIC DNA]</scope>
    <source>
        <strain>ATCC MYA-4892 / CBS 513.88 / FGSC A1513</strain>
    </source>
</reference>
<protein>
    <recommendedName>
        <fullName evidence="1">Deoxyhypusine hydroxylase</fullName>
        <shortName evidence="1">DOHH</shortName>
        <ecNumber evidence="1">1.14.99.29</ecNumber>
    </recommendedName>
    <alternativeName>
        <fullName evidence="1">Deoxyhypusine dioxygenase</fullName>
    </alternativeName>
    <alternativeName>
        <fullName evidence="1">Deoxyhypusine monooxygenase</fullName>
    </alternativeName>
</protein>
<accession>A2QXL3</accession>
<gene>
    <name type="primary">lia1</name>
    <name type="ORF">An11g09380</name>
</gene>
<proteinExistence type="inferred from homology"/>
<dbReference type="EC" id="1.14.99.29" evidence="1"/>
<dbReference type="EMBL" id="AM270249">
    <property type="protein sequence ID" value="CAK40811.1"/>
    <property type="molecule type" value="Genomic_DNA"/>
</dbReference>
<dbReference type="RefSeq" id="XP_001394896.1">
    <property type="nucleotide sequence ID" value="XM_001394859.2"/>
</dbReference>
<dbReference type="SMR" id="A2QXL3"/>
<dbReference type="EnsemblFungi" id="CAK40811">
    <property type="protein sequence ID" value="CAK40811"/>
    <property type="gene ID" value="An11g09380"/>
</dbReference>
<dbReference type="GeneID" id="4985154"/>
<dbReference type="KEGG" id="ang:An11g09380"/>
<dbReference type="VEuPathDB" id="FungiDB:An11g09380"/>
<dbReference type="HOGENOM" id="CLU_053974_0_0_1"/>
<dbReference type="UniPathway" id="UPA00354"/>
<dbReference type="Proteomes" id="UP000006706">
    <property type="component" value="Chromosome 7R"/>
</dbReference>
<dbReference type="GO" id="GO:0005737">
    <property type="term" value="C:cytoplasm"/>
    <property type="evidence" value="ECO:0007669"/>
    <property type="project" value="UniProtKB-SubCell"/>
</dbReference>
<dbReference type="GO" id="GO:0005634">
    <property type="term" value="C:nucleus"/>
    <property type="evidence" value="ECO:0007669"/>
    <property type="project" value="UniProtKB-SubCell"/>
</dbReference>
<dbReference type="GO" id="GO:0019135">
    <property type="term" value="F:deoxyhypusine monooxygenase activity"/>
    <property type="evidence" value="ECO:0007669"/>
    <property type="project" value="UniProtKB-UniRule"/>
</dbReference>
<dbReference type="GO" id="GO:0046872">
    <property type="term" value="F:metal ion binding"/>
    <property type="evidence" value="ECO:0007669"/>
    <property type="project" value="UniProtKB-KW"/>
</dbReference>
<dbReference type="Gene3D" id="1.25.10.10">
    <property type="entry name" value="Leucine-rich Repeat Variant"/>
    <property type="match status" value="2"/>
</dbReference>
<dbReference type="HAMAP" id="MF_03101">
    <property type="entry name" value="Deoxyhypusine_hydroxylase"/>
    <property type="match status" value="1"/>
</dbReference>
<dbReference type="InterPro" id="IPR011989">
    <property type="entry name" value="ARM-like"/>
</dbReference>
<dbReference type="InterPro" id="IPR016024">
    <property type="entry name" value="ARM-type_fold"/>
</dbReference>
<dbReference type="InterPro" id="IPR027517">
    <property type="entry name" value="Deoxyhypusine_hydroxylase"/>
</dbReference>
<dbReference type="InterPro" id="IPR021133">
    <property type="entry name" value="HEAT_type_2"/>
</dbReference>
<dbReference type="InterPro" id="IPR004155">
    <property type="entry name" value="PBS_lyase_HEAT"/>
</dbReference>
<dbReference type="PANTHER" id="PTHR12697:SF5">
    <property type="entry name" value="DEOXYHYPUSINE HYDROXYLASE"/>
    <property type="match status" value="1"/>
</dbReference>
<dbReference type="PANTHER" id="PTHR12697">
    <property type="entry name" value="PBS LYASE HEAT-LIKE PROTEIN"/>
    <property type="match status" value="1"/>
</dbReference>
<dbReference type="Pfam" id="PF13646">
    <property type="entry name" value="HEAT_2"/>
    <property type="match status" value="2"/>
</dbReference>
<dbReference type="SMART" id="SM00567">
    <property type="entry name" value="EZ_HEAT"/>
    <property type="match status" value="5"/>
</dbReference>
<dbReference type="SUPFAM" id="SSF48371">
    <property type="entry name" value="ARM repeat"/>
    <property type="match status" value="1"/>
</dbReference>
<dbReference type="PROSITE" id="PS50077">
    <property type="entry name" value="HEAT_REPEAT"/>
    <property type="match status" value="1"/>
</dbReference>
<feature type="chain" id="PRO_0000283656" description="Deoxyhypusine hydroxylase">
    <location>
        <begin position="1"/>
        <end position="338"/>
    </location>
</feature>
<feature type="repeat" description="HEAT-like PBS-type 1">
    <location>
        <begin position="71"/>
        <end position="97"/>
    </location>
</feature>
<feature type="repeat" description="HEAT-like PBS-type 2">
    <location>
        <begin position="104"/>
        <end position="130"/>
    </location>
</feature>
<feature type="repeat" description="HEAT-like PBS-type 3">
    <location>
        <begin position="200"/>
        <end position="233"/>
    </location>
</feature>
<feature type="repeat" description="HEAT-like PBS-type 4">
    <location>
        <begin position="238"/>
        <end position="264"/>
    </location>
</feature>
<feature type="repeat" description="HEAT-like PBS-type 5">
    <location>
        <begin position="271"/>
        <end position="298"/>
    </location>
</feature>
<feature type="binding site" evidence="1">
    <location>
        <position position="73"/>
    </location>
    <ligand>
        <name>Fe cation</name>
        <dbReference type="ChEBI" id="CHEBI:24875"/>
        <label>1</label>
    </ligand>
</feature>
<feature type="binding site" evidence="1">
    <location>
        <position position="74"/>
    </location>
    <ligand>
        <name>Fe cation</name>
        <dbReference type="ChEBI" id="CHEBI:24875"/>
        <label>1</label>
    </ligand>
</feature>
<feature type="binding site" evidence="1">
    <location>
        <position position="106"/>
    </location>
    <ligand>
        <name>Fe cation</name>
        <dbReference type="ChEBI" id="CHEBI:24875"/>
        <label>1</label>
    </ligand>
</feature>
<feature type="binding site" evidence="1">
    <location>
        <position position="107"/>
    </location>
    <ligand>
        <name>Fe cation</name>
        <dbReference type="ChEBI" id="CHEBI:24875"/>
        <label>1</label>
    </ligand>
</feature>
<feature type="binding site" evidence="1">
    <location>
        <position position="240"/>
    </location>
    <ligand>
        <name>Fe cation</name>
        <dbReference type="ChEBI" id="CHEBI:24875"/>
        <label>2</label>
    </ligand>
</feature>
<feature type="binding site" evidence="1">
    <location>
        <position position="241"/>
    </location>
    <ligand>
        <name>Fe cation</name>
        <dbReference type="ChEBI" id="CHEBI:24875"/>
        <label>2</label>
    </ligand>
</feature>
<feature type="binding site" evidence="1">
    <location>
        <position position="273"/>
    </location>
    <ligand>
        <name>Fe cation</name>
        <dbReference type="ChEBI" id="CHEBI:24875"/>
        <label>2</label>
    </ligand>
</feature>
<feature type="binding site" evidence="1">
    <location>
        <position position="274"/>
    </location>
    <ligand>
        <name>Fe cation</name>
        <dbReference type="ChEBI" id="CHEBI:24875"/>
        <label>2</label>
    </ligand>
</feature>
<keyword id="KW-0963">Cytoplasm</keyword>
<keyword id="KW-0386">Hypusine biosynthesis</keyword>
<keyword id="KW-0408">Iron</keyword>
<keyword id="KW-0479">Metal-binding</keyword>
<keyword id="KW-0503">Monooxygenase</keyword>
<keyword id="KW-0539">Nucleus</keyword>
<keyword id="KW-0560">Oxidoreductase</keyword>
<keyword id="KW-1185">Reference proteome</keyword>
<keyword id="KW-0677">Repeat</keyword>
<name>DOHH_ASPNC</name>
<organism>
    <name type="scientific">Aspergillus niger (strain ATCC MYA-4892 / CBS 513.88 / FGSC A1513)</name>
    <dbReference type="NCBI Taxonomy" id="425011"/>
    <lineage>
        <taxon>Eukaryota</taxon>
        <taxon>Fungi</taxon>
        <taxon>Dikarya</taxon>
        <taxon>Ascomycota</taxon>
        <taxon>Pezizomycotina</taxon>
        <taxon>Eurotiomycetes</taxon>
        <taxon>Eurotiomycetidae</taxon>
        <taxon>Eurotiales</taxon>
        <taxon>Aspergillaceae</taxon>
        <taxon>Aspergillus</taxon>
        <taxon>Aspergillus subgen. Circumdati</taxon>
    </lineage>
</organism>